<accession>P0DTF1</accession>
<organism>
    <name type="scientific">Severe acute respiratory syndrome coronavirus 2</name>
    <name type="common">2019-nCoV</name>
    <name type="synonym">SARS-CoV-2</name>
    <dbReference type="NCBI Taxonomy" id="2697049"/>
    <lineage>
        <taxon>Viruses</taxon>
        <taxon>Riboviria</taxon>
        <taxon>Orthornavirae</taxon>
        <taxon>Pisuviricota</taxon>
        <taxon>Pisoniviricetes</taxon>
        <taxon>Nidovirales</taxon>
        <taxon>Cornidovirineae</taxon>
        <taxon>Coronaviridae</taxon>
        <taxon>Orthocoronavirinae</taxon>
        <taxon>Betacoronavirus</taxon>
        <taxon>Sarbecovirus</taxon>
        <taxon>Severe acute respiratory syndrome coronavirus</taxon>
    </lineage>
</organism>
<name>ORF3B_SARS2</name>
<comment type="function">
    <text evidence="2">Acts as an interferon antagonist when expressed ex vivo.</text>
</comment>
<comment type="interaction">
    <interactant intactId="EBI-26953451">
        <id>P0DTF1</id>
    </interactant>
    <interactant intactId="EBI-20141748">
        <id>P52954</id>
        <label>LBX1</label>
    </interactant>
    <organismsDiffer>true</organismsDiffer>
    <experiments>3</experiments>
</comment>
<comment type="interaction">
    <interactant intactId="EBI-26953451">
        <id>P0DTF1</id>
    </interactant>
    <interactant intactId="EBI-11420856">
        <id>Q9GZY8</id>
        <label>MFF</label>
    </interactant>
    <organismsDiffer>true</organismsDiffer>
    <experiments>3</experiments>
</comment>
<comment type="miscellaneous">
    <text evidence="1 4">SARS-CoV-2 ORF3b is homologous to SARS-CoV ORF3b, although the proposed protein is much shorter due to the presence of premature stop codons (Probable). Elicits strong specific antibody response (PubMed:32807944).</text>
</comment>
<comment type="caution">
    <text evidence="3">Product of a dubious CDS prediction.</text>
</comment>
<sequence length="22" mass="2457">MMPTIFFAGILIVTTIVYLTIV</sequence>
<feature type="chain" id="PRO_0000452089" description="Putative ORF3b protein">
    <location>
        <begin position="1"/>
        <end position="22"/>
    </location>
</feature>
<keyword id="KW-0945">Host-virus interaction</keyword>
<keyword id="KW-1090">Inhibition of host innate immune response by virus</keyword>
<keyword id="KW-0922">Interferon antiviral system evasion</keyword>
<keyword id="KW-1185">Reference proteome</keyword>
<keyword id="KW-0899">Viral immunoevasion</keyword>
<reference key="1">
    <citation type="journal article" date="2020" name="Nature">
        <title>A new coronavirus associated with human respiratory disease in China.</title>
        <authorList>
            <person name="Wu F."/>
            <person name="Zhao S."/>
            <person name="Yu B."/>
            <person name="Chen Y.-M."/>
            <person name="Wang W."/>
            <person name="Song Z.-G."/>
            <person name="Hu Y."/>
            <person name="Tao Z.-W."/>
            <person name="Tian J.-H."/>
            <person name="Pei Y.-Y."/>
            <person name="Yuan M.-L."/>
            <person name="Zhang Y.-L."/>
            <person name="Dai F.-H."/>
            <person name="Liu Y."/>
            <person name="Wang Q.-M."/>
            <person name="Zheng J.-J."/>
            <person name="Xu L."/>
            <person name="Holmes E.C."/>
            <person name="Zhang Y.-Z."/>
        </authorList>
    </citation>
    <scope>NUCLEOTIDE SEQUENCE [GENOMIC RNA]</scope>
</reference>
<reference key="2">
    <citation type="journal article" date="2020" name="Virol. J.">
        <title>Characterization of accessory genes in coronavirus genomes.</title>
        <authorList>
            <person name="Michel C.J."/>
            <person name="Mayer C."/>
            <person name="Poch O."/>
            <person name="Thompson J.D."/>
        </authorList>
    </citation>
    <scope>REVIEW</scope>
</reference>
<reference key="3">
    <citation type="journal article" date="2020" name="Nat. Immunol.">
        <title>ORF8 and ORF3b antibodies are accurate serological markers of early and late SARS-CoV-2 infection.</title>
        <authorList>
            <person name="Hachim A."/>
            <person name="Kavian N."/>
            <person name="Cohen C.A."/>
            <person name="Chin A.W.H."/>
            <person name="Chu D.K.W."/>
            <person name="Mok C.K.P."/>
            <person name="Tsang O.T.Y."/>
            <person name="Yeung Y.C."/>
            <person name="Perera R.A.P.M."/>
            <person name="Poon L.L.M."/>
            <person name="Peiris J.S.M."/>
            <person name="Valkenburg S.A."/>
        </authorList>
    </citation>
    <scope>MISCELLANEOUS</scope>
</reference>
<reference key="4">
    <citation type="journal article" date="2020" name="Cell Rep.">
        <title>SARS-CoV-2 ORF3b Is a Potent Interferon Antagonist Whose Activity Is Increased by a Naturally Occurring Elongation Variant.</title>
        <authorList>
            <consortium name="USFQ-COVID19 Consortium"/>
            <person name="Konno Y."/>
            <person name="Kimura I."/>
            <person name="Uriu K."/>
            <person name="Fukushi M."/>
            <person name="Irie T."/>
            <person name="Koyanagi Y."/>
            <person name="Sauter D."/>
            <person name="Gifford R.J."/>
            <person name="Nakagawa S."/>
            <person name="Sato K."/>
        </authorList>
    </citation>
    <scope>FUNCTION</scope>
</reference>
<reference key="5">
    <citation type="journal article" date="2021" name="Nat. Commun.">
        <title>SARS-CoV-2 gene content and COVID-19 mutation impact by comparing 44 Sarbecovirus genomes.</title>
        <authorList>
            <person name="Jungreis I."/>
            <person name="Sealfon R."/>
            <person name="Kellis M."/>
        </authorList>
    </citation>
    <scope>GENOME REANNOTATION</scope>
</reference>
<proteinExistence type="uncertain"/>
<organismHost>
    <name type="scientific">Homo sapiens</name>
    <name type="common">Human</name>
    <dbReference type="NCBI Taxonomy" id="9606"/>
</organismHost>
<protein>
    <recommendedName>
        <fullName evidence="4">Putative ORF3b protein</fullName>
        <shortName>ORF3b</shortName>
    </recommendedName>
</protein>
<evidence type="ECO:0000269" key="1">
    <source>
    </source>
</evidence>
<evidence type="ECO:0000269" key="2">
    <source>
    </source>
</evidence>
<evidence type="ECO:0000303" key="3">
    <source>
    </source>
</evidence>
<evidence type="ECO:0000305" key="4">
    <source>
    </source>
</evidence>
<dbReference type="EMBL" id="MN908947">
    <property type="status" value="NOT_ANNOTATED_CDS"/>
    <property type="molecule type" value="Genomic_RNA"/>
</dbReference>
<dbReference type="FunCoup" id="P0DTF1">
    <property type="interactions" value="135"/>
</dbReference>
<dbReference type="IntAct" id="P0DTF1">
    <property type="interactions" value="36"/>
</dbReference>
<dbReference type="MINT" id="P0DTF1"/>
<dbReference type="PRO" id="PR:P0DTF1"/>
<dbReference type="Proteomes" id="UP000464024">
    <property type="component" value="Genome"/>
</dbReference>
<dbReference type="GO" id="GO:0052170">
    <property type="term" value="P:symbiont-mediated suppression of host innate immune response"/>
    <property type="evidence" value="ECO:0007669"/>
    <property type="project" value="UniProtKB-KW"/>
</dbReference>